<sequence>MATINQLVNSPRKRSVVKSKVPALKACPQRRGVCTRVYTTTPKKPNSALRKVARVRLTSGFEVTSYIGGEGHNLQEHSVVLIRGGRVKDLPGVRYHIVRGALDTSGVNNRKHGRSKYGTKRPKS</sequence>
<dbReference type="EMBL" id="CP000937">
    <property type="protein sequence ID" value="ABZ86809.1"/>
    <property type="molecule type" value="Genomic_DNA"/>
</dbReference>
<dbReference type="SMR" id="B0U0Z3"/>
<dbReference type="KEGG" id="fph:Fphi_0590"/>
<dbReference type="eggNOG" id="COG0048">
    <property type="taxonomic scope" value="Bacteria"/>
</dbReference>
<dbReference type="HOGENOM" id="CLU_104295_1_2_6"/>
<dbReference type="GO" id="GO:0015935">
    <property type="term" value="C:small ribosomal subunit"/>
    <property type="evidence" value="ECO:0007669"/>
    <property type="project" value="InterPro"/>
</dbReference>
<dbReference type="GO" id="GO:0019843">
    <property type="term" value="F:rRNA binding"/>
    <property type="evidence" value="ECO:0007669"/>
    <property type="project" value="UniProtKB-UniRule"/>
</dbReference>
<dbReference type="GO" id="GO:0003735">
    <property type="term" value="F:structural constituent of ribosome"/>
    <property type="evidence" value="ECO:0007669"/>
    <property type="project" value="InterPro"/>
</dbReference>
<dbReference type="GO" id="GO:0000049">
    <property type="term" value="F:tRNA binding"/>
    <property type="evidence" value="ECO:0007669"/>
    <property type="project" value="UniProtKB-UniRule"/>
</dbReference>
<dbReference type="GO" id="GO:0006412">
    <property type="term" value="P:translation"/>
    <property type="evidence" value="ECO:0007669"/>
    <property type="project" value="UniProtKB-UniRule"/>
</dbReference>
<dbReference type="CDD" id="cd03368">
    <property type="entry name" value="Ribosomal_S12"/>
    <property type="match status" value="1"/>
</dbReference>
<dbReference type="FunFam" id="2.40.50.140:FF:000001">
    <property type="entry name" value="30S ribosomal protein S12"/>
    <property type="match status" value="1"/>
</dbReference>
<dbReference type="Gene3D" id="2.40.50.140">
    <property type="entry name" value="Nucleic acid-binding proteins"/>
    <property type="match status" value="1"/>
</dbReference>
<dbReference type="HAMAP" id="MF_00403_B">
    <property type="entry name" value="Ribosomal_uS12_B"/>
    <property type="match status" value="1"/>
</dbReference>
<dbReference type="InterPro" id="IPR012340">
    <property type="entry name" value="NA-bd_OB-fold"/>
</dbReference>
<dbReference type="InterPro" id="IPR006032">
    <property type="entry name" value="Ribosomal_uS12"/>
</dbReference>
<dbReference type="InterPro" id="IPR005679">
    <property type="entry name" value="Ribosomal_uS12_bac"/>
</dbReference>
<dbReference type="NCBIfam" id="TIGR00981">
    <property type="entry name" value="rpsL_bact"/>
    <property type="match status" value="1"/>
</dbReference>
<dbReference type="PANTHER" id="PTHR11652">
    <property type="entry name" value="30S RIBOSOMAL PROTEIN S12 FAMILY MEMBER"/>
    <property type="match status" value="1"/>
</dbReference>
<dbReference type="Pfam" id="PF00164">
    <property type="entry name" value="Ribosom_S12_S23"/>
    <property type="match status" value="1"/>
</dbReference>
<dbReference type="PIRSF" id="PIRSF002133">
    <property type="entry name" value="Ribosomal_S12/S23"/>
    <property type="match status" value="1"/>
</dbReference>
<dbReference type="PRINTS" id="PR01034">
    <property type="entry name" value="RIBOSOMALS12"/>
</dbReference>
<dbReference type="SUPFAM" id="SSF50249">
    <property type="entry name" value="Nucleic acid-binding proteins"/>
    <property type="match status" value="1"/>
</dbReference>
<dbReference type="PROSITE" id="PS00055">
    <property type="entry name" value="RIBOSOMAL_S12"/>
    <property type="match status" value="1"/>
</dbReference>
<gene>
    <name evidence="2" type="primary">rpsL</name>
    <name type="ordered locus">Fphi_0590</name>
</gene>
<comment type="function">
    <text evidence="2">With S4 and S5 plays an important role in translational accuracy.</text>
</comment>
<comment type="function">
    <text evidence="2">Interacts with and stabilizes bases of the 16S rRNA that are involved in tRNA selection in the A site and with the mRNA backbone. Located at the interface of the 30S and 50S subunits, it traverses the body of the 30S subunit contacting proteins on the other side and probably holding the rRNA structure together. The combined cluster of proteins S8, S12 and S17 appears to hold together the shoulder and platform of the 30S subunit.</text>
</comment>
<comment type="subunit">
    <text evidence="2">Part of the 30S ribosomal subunit. Contacts proteins S8 and S17. May interact with IF1 in the 30S initiation complex.</text>
</comment>
<comment type="similarity">
    <text evidence="2">Belongs to the universal ribosomal protein uS12 family.</text>
</comment>
<accession>B0U0Z3</accession>
<proteinExistence type="inferred from homology"/>
<name>RS12_FRAP2</name>
<feature type="chain" id="PRO_1000080396" description="Small ribosomal subunit protein uS12">
    <location>
        <begin position="1"/>
        <end position="124"/>
    </location>
</feature>
<feature type="region of interest" description="Disordered" evidence="3">
    <location>
        <begin position="102"/>
        <end position="124"/>
    </location>
</feature>
<feature type="compositionally biased region" description="Basic residues" evidence="3">
    <location>
        <begin position="109"/>
        <end position="124"/>
    </location>
</feature>
<feature type="modified residue" description="3-methylthioaspartic acid" evidence="1">
    <location>
        <position position="89"/>
    </location>
</feature>
<evidence type="ECO:0000250" key="1"/>
<evidence type="ECO:0000255" key="2">
    <source>
        <dbReference type="HAMAP-Rule" id="MF_00403"/>
    </source>
</evidence>
<evidence type="ECO:0000256" key="3">
    <source>
        <dbReference type="SAM" id="MobiDB-lite"/>
    </source>
</evidence>
<evidence type="ECO:0000305" key="4"/>
<protein>
    <recommendedName>
        <fullName evidence="2">Small ribosomal subunit protein uS12</fullName>
    </recommendedName>
    <alternativeName>
        <fullName evidence="4">30S ribosomal protein S12</fullName>
    </alternativeName>
</protein>
<keyword id="KW-0488">Methylation</keyword>
<keyword id="KW-0687">Ribonucleoprotein</keyword>
<keyword id="KW-0689">Ribosomal protein</keyword>
<keyword id="KW-0694">RNA-binding</keyword>
<keyword id="KW-0699">rRNA-binding</keyword>
<keyword id="KW-0820">tRNA-binding</keyword>
<reference key="1">
    <citation type="submission" date="2007-12" db="EMBL/GenBank/DDBJ databases">
        <title>Complete sequence of chromosome of Francisella philomiragia subsp. philomiragia ATCC 25017.</title>
        <authorList>
            <consortium name="US DOE Joint Genome Institute"/>
            <person name="Copeland A."/>
            <person name="Lucas S."/>
            <person name="Lapidus A."/>
            <person name="Barry K."/>
            <person name="Detter J.C."/>
            <person name="Glavina del Rio T."/>
            <person name="Hammon N."/>
            <person name="Israni S."/>
            <person name="Dalin E."/>
            <person name="Tice H."/>
            <person name="Pitluck S."/>
            <person name="Chain P."/>
            <person name="Malfatti S."/>
            <person name="Shin M."/>
            <person name="Vergez L."/>
            <person name="Schmutz J."/>
            <person name="Larimer F."/>
            <person name="Land M."/>
            <person name="Hauser L."/>
            <person name="Richardson P."/>
        </authorList>
    </citation>
    <scope>NUCLEOTIDE SEQUENCE [LARGE SCALE GENOMIC DNA]</scope>
    <source>
        <strain>ATCC 25017 / CCUG 19701 / FSC 153 / O#319-036</strain>
    </source>
</reference>
<organism>
    <name type="scientific">Francisella philomiragia subsp. philomiragia (strain ATCC 25017 / CCUG 19701 / FSC 153 / O#319-036)</name>
    <dbReference type="NCBI Taxonomy" id="484022"/>
    <lineage>
        <taxon>Bacteria</taxon>
        <taxon>Pseudomonadati</taxon>
        <taxon>Pseudomonadota</taxon>
        <taxon>Gammaproteobacteria</taxon>
        <taxon>Thiotrichales</taxon>
        <taxon>Francisellaceae</taxon>
        <taxon>Francisella</taxon>
    </lineage>
</organism>